<gene>
    <name evidence="1" type="primary">glmU</name>
    <name type="ordered locus">BC_0054</name>
</gene>
<organism>
    <name type="scientific">Bacillus cereus (strain ATCC 14579 / DSM 31 / CCUG 7414 / JCM 2152 / NBRC 15305 / NCIMB 9373 / NCTC 2599 / NRRL B-3711)</name>
    <dbReference type="NCBI Taxonomy" id="226900"/>
    <lineage>
        <taxon>Bacteria</taxon>
        <taxon>Bacillati</taxon>
        <taxon>Bacillota</taxon>
        <taxon>Bacilli</taxon>
        <taxon>Bacillales</taxon>
        <taxon>Bacillaceae</taxon>
        <taxon>Bacillus</taxon>
        <taxon>Bacillus cereus group</taxon>
    </lineage>
</organism>
<comment type="function">
    <text evidence="1">Catalyzes the last two sequential reactions in the de novo biosynthetic pathway for UDP-N-acetylglucosamine (UDP-GlcNAc). The C-terminal domain catalyzes the transfer of acetyl group from acetyl coenzyme A to glucosamine-1-phosphate (GlcN-1-P) to produce N-acetylglucosamine-1-phosphate (GlcNAc-1-P), which is converted into UDP-GlcNAc by the transfer of uridine 5-monophosphate (from uridine 5-triphosphate), a reaction catalyzed by the N-terminal domain.</text>
</comment>
<comment type="catalytic activity">
    <reaction evidence="1">
        <text>alpha-D-glucosamine 1-phosphate + acetyl-CoA = N-acetyl-alpha-D-glucosamine 1-phosphate + CoA + H(+)</text>
        <dbReference type="Rhea" id="RHEA:13725"/>
        <dbReference type="ChEBI" id="CHEBI:15378"/>
        <dbReference type="ChEBI" id="CHEBI:57287"/>
        <dbReference type="ChEBI" id="CHEBI:57288"/>
        <dbReference type="ChEBI" id="CHEBI:57776"/>
        <dbReference type="ChEBI" id="CHEBI:58516"/>
        <dbReference type="EC" id="2.3.1.157"/>
    </reaction>
</comment>
<comment type="catalytic activity">
    <reaction evidence="1">
        <text>N-acetyl-alpha-D-glucosamine 1-phosphate + UTP + H(+) = UDP-N-acetyl-alpha-D-glucosamine + diphosphate</text>
        <dbReference type="Rhea" id="RHEA:13509"/>
        <dbReference type="ChEBI" id="CHEBI:15378"/>
        <dbReference type="ChEBI" id="CHEBI:33019"/>
        <dbReference type="ChEBI" id="CHEBI:46398"/>
        <dbReference type="ChEBI" id="CHEBI:57705"/>
        <dbReference type="ChEBI" id="CHEBI:57776"/>
        <dbReference type="EC" id="2.7.7.23"/>
    </reaction>
</comment>
<comment type="cofactor">
    <cofactor evidence="1">
        <name>Mg(2+)</name>
        <dbReference type="ChEBI" id="CHEBI:18420"/>
    </cofactor>
    <text evidence="1">Binds 1 Mg(2+) ion per subunit.</text>
</comment>
<comment type="pathway">
    <text evidence="1">Nucleotide-sugar biosynthesis; UDP-N-acetyl-alpha-D-glucosamine biosynthesis; N-acetyl-alpha-D-glucosamine 1-phosphate from alpha-D-glucosamine 6-phosphate (route II): step 2/2.</text>
</comment>
<comment type="pathway">
    <text evidence="1">Nucleotide-sugar biosynthesis; UDP-N-acetyl-alpha-D-glucosamine biosynthesis; UDP-N-acetyl-alpha-D-glucosamine from N-acetyl-alpha-D-glucosamine 1-phosphate: step 1/1.</text>
</comment>
<comment type="pathway">
    <text evidence="1">Bacterial outer membrane biogenesis; LPS lipid A biosynthesis.</text>
</comment>
<comment type="subunit">
    <text evidence="1">Homotrimer.</text>
</comment>
<comment type="subcellular location">
    <subcellularLocation>
        <location evidence="1">Cytoplasm</location>
    </subcellularLocation>
</comment>
<comment type="similarity">
    <text evidence="1">In the N-terminal section; belongs to the N-acetylglucosamine-1-phosphate uridyltransferase family.</text>
</comment>
<comment type="similarity">
    <text evidence="1">In the C-terminal section; belongs to the transferase hexapeptide repeat family.</text>
</comment>
<protein>
    <recommendedName>
        <fullName evidence="1">Bifunctional protein GlmU</fullName>
    </recommendedName>
    <domain>
        <recommendedName>
            <fullName evidence="1">UDP-N-acetylglucosamine pyrophosphorylase</fullName>
            <ecNumber evidence="1">2.7.7.23</ecNumber>
        </recommendedName>
        <alternativeName>
            <fullName evidence="1">N-acetylglucosamine-1-phosphate uridyltransferase</fullName>
        </alternativeName>
    </domain>
    <domain>
        <recommendedName>
            <fullName evidence="1">Glucosamine-1-phosphate N-acetyltransferase</fullName>
            <ecNumber evidence="1">2.3.1.157</ecNumber>
        </recommendedName>
    </domain>
</protein>
<dbReference type="EC" id="2.7.7.23" evidence="1"/>
<dbReference type="EC" id="2.3.1.157" evidence="1"/>
<dbReference type="EMBL" id="AE016877">
    <property type="protein sequence ID" value="AAP07152.1"/>
    <property type="molecule type" value="Genomic_DNA"/>
</dbReference>
<dbReference type="RefSeq" id="NP_829951.1">
    <property type="nucleotide sequence ID" value="NC_004722.1"/>
</dbReference>
<dbReference type="RefSeq" id="WP_000071041.1">
    <property type="nucleotide sequence ID" value="NZ_CP138336.1"/>
</dbReference>
<dbReference type="SMR" id="Q81J98"/>
<dbReference type="STRING" id="226900.BC_0054"/>
<dbReference type="KEGG" id="bce:BC0054"/>
<dbReference type="PATRIC" id="fig|226900.8.peg.71"/>
<dbReference type="HOGENOM" id="CLU_029499_15_2_9"/>
<dbReference type="OrthoDB" id="9775031at2"/>
<dbReference type="UniPathway" id="UPA00113">
    <property type="reaction ID" value="UER00532"/>
</dbReference>
<dbReference type="UniPathway" id="UPA00113">
    <property type="reaction ID" value="UER00533"/>
</dbReference>
<dbReference type="UniPathway" id="UPA00973"/>
<dbReference type="Proteomes" id="UP000001417">
    <property type="component" value="Chromosome"/>
</dbReference>
<dbReference type="GO" id="GO:0005737">
    <property type="term" value="C:cytoplasm"/>
    <property type="evidence" value="ECO:0007669"/>
    <property type="project" value="UniProtKB-SubCell"/>
</dbReference>
<dbReference type="GO" id="GO:0016020">
    <property type="term" value="C:membrane"/>
    <property type="evidence" value="ECO:0007669"/>
    <property type="project" value="GOC"/>
</dbReference>
<dbReference type="GO" id="GO:0019134">
    <property type="term" value="F:glucosamine-1-phosphate N-acetyltransferase activity"/>
    <property type="evidence" value="ECO:0007669"/>
    <property type="project" value="UniProtKB-UniRule"/>
</dbReference>
<dbReference type="GO" id="GO:0000287">
    <property type="term" value="F:magnesium ion binding"/>
    <property type="evidence" value="ECO:0007669"/>
    <property type="project" value="UniProtKB-UniRule"/>
</dbReference>
<dbReference type="GO" id="GO:0003977">
    <property type="term" value="F:UDP-N-acetylglucosamine diphosphorylase activity"/>
    <property type="evidence" value="ECO:0007669"/>
    <property type="project" value="UniProtKB-UniRule"/>
</dbReference>
<dbReference type="GO" id="GO:0000902">
    <property type="term" value="P:cell morphogenesis"/>
    <property type="evidence" value="ECO:0007669"/>
    <property type="project" value="UniProtKB-UniRule"/>
</dbReference>
<dbReference type="GO" id="GO:0071555">
    <property type="term" value="P:cell wall organization"/>
    <property type="evidence" value="ECO:0007669"/>
    <property type="project" value="UniProtKB-KW"/>
</dbReference>
<dbReference type="GO" id="GO:0009245">
    <property type="term" value="P:lipid A biosynthetic process"/>
    <property type="evidence" value="ECO:0007669"/>
    <property type="project" value="UniProtKB-UniRule"/>
</dbReference>
<dbReference type="GO" id="GO:0009252">
    <property type="term" value="P:peptidoglycan biosynthetic process"/>
    <property type="evidence" value="ECO:0007669"/>
    <property type="project" value="UniProtKB-UniRule"/>
</dbReference>
<dbReference type="GO" id="GO:0008360">
    <property type="term" value="P:regulation of cell shape"/>
    <property type="evidence" value="ECO:0007669"/>
    <property type="project" value="UniProtKB-KW"/>
</dbReference>
<dbReference type="GO" id="GO:0006048">
    <property type="term" value="P:UDP-N-acetylglucosamine biosynthetic process"/>
    <property type="evidence" value="ECO:0007669"/>
    <property type="project" value="UniProtKB-UniPathway"/>
</dbReference>
<dbReference type="CDD" id="cd02540">
    <property type="entry name" value="GT2_GlmU_N_bac"/>
    <property type="match status" value="1"/>
</dbReference>
<dbReference type="CDD" id="cd03353">
    <property type="entry name" value="LbH_GlmU_C"/>
    <property type="match status" value="1"/>
</dbReference>
<dbReference type="FunFam" id="2.160.10.10:FF:000016">
    <property type="entry name" value="Bifunctional protein GlmU"/>
    <property type="match status" value="1"/>
</dbReference>
<dbReference type="FunFam" id="3.90.550.10:FF:000006">
    <property type="entry name" value="Bifunctional protein GlmU"/>
    <property type="match status" value="1"/>
</dbReference>
<dbReference type="Gene3D" id="2.160.10.10">
    <property type="entry name" value="Hexapeptide repeat proteins"/>
    <property type="match status" value="1"/>
</dbReference>
<dbReference type="Gene3D" id="3.90.550.10">
    <property type="entry name" value="Spore Coat Polysaccharide Biosynthesis Protein SpsA, Chain A"/>
    <property type="match status" value="1"/>
</dbReference>
<dbReference type="HAMAP" id="MF_01631">
    <property type="entry name" value="GlmU"/>
    <property type="match status" value="1"/>
</dbReference>
<dbReference type="InterPro" id="IPR005882">
    <property type="entry name" value="Bifunctional_GlmU"/>
</dbReference>
<dbReference type="InterPro" id="IPR050065">
    <property type="entry name" value="GlmU-like"/>
</dbReference>
<dbReference type="InterPro" id="IPR038009">
    <property type="entry name" value="GlmU_C_LbH"/>
</dbReference>
<dbReference type="InterPro" id="IPR001451">
    <property type="entry name" value="Hexapep"/>
</dbReference>
<dbReference type="InterPro" id="IPR018357">
    <property type="entry name" value="Hexapep_transf_CS"/>
</dbReference>
<dbReference type="InterPro" id="IPR005835">
    <property type="entry name" value="NTP_transferase_dom"/>
</dbReference>
<dbReference type="InterPro" id="IPR029044">
    <property type="entry name" value="Nucleotide-diphossugar_trans"/>
</dbReference>
<dbReference type="InterPro" id="IPR011004">
    <property type="entry name" value="Trimer_LpxA-like_sf"/>
</dbReference>
<dbReference type="NCBIfam" id="TIGR01173">
    <property type="entry name" value="glmU"/>
    <property type="match status" value="1"/>
</dbReference>
<dbReference type="NCBIfam" id="NF010934">
    <property type="entry name" value="PRK14354.1"/>
    <property type="match status" value="1"/>
</dbReference>
<dbReference type="PANTHER" id="PTHR43584:SF3">
    <property type="entry name" value="BIFUNCTIONAL PROTEIN GLMU"/>
    <property type="match status" value="1"/>
</dbReference>
<dbReference type="PANTHER" id="PTHR43584">
    <property type="entry name" value="NUCLEOTIDYL TRANSFERASE"/>
    <property type="match status" value="1"/>
</dbReference>
<dbReference type="Pfam" id="PF00132">
    <property type="entry name" value="Hexapep"/>
    <property type="match status" value="3"/>
</dbReference>
<dbReference type="Pfam" id="PF00483">
    <property type="entry name" value="NTP_transferase"/>
    <property type="match status" value="1"/>
</dbReference>
<dbReference type="SUPFAM" id="SSF53448">
    <property type="entry name" value="Nucleotide-diphospho-sugar transferases"/>
    <property type="match status" value="1"/>
</dbReference>
<dbReference type="SUPFAM" id="SSF51161">
    <property type="entry name" value="Trimeric LpxA-like enzymes"/>
    <property type="match status" value="1"/>
</dbReference>
<dbReference type="PROSITE" id="PS00101">
    <property type="entry name" value="HEXAPEP_TRANSFERASES"/>
    <property type="match status" value="1"/>
</dbReference>
<keyword id="KW-0012">Acyltransferase</keyword>
<keyword id="KW-0133">Cell shape</keyword>
<keyword id="KW-0961">Cell wall biogenesis/degradation</keyword>
<keyword id="KW-0963">Cytoplasm</keyword>
<keyword id="KW-0460">Magnesium</keyword>
<keyword id="KW-0479">Metal-binding</keyword>
<keyword id="KW-0511">Multifunctional enzyme</keyword>
<keyword id="KW-0548">Nucleotidyltransferase</keyword>
<keyword id="KW-0573">Peptidoglycan synthesis</keyword>
<keyword id="KW-1185">Reference proteome</keyword>
<keyword id="KW-0677">Repeat</keyword>
<keyword id="KW-0808">Transferase</keyword>
<proteinExistence type="inferred from homology"/>
<feature type="chain" id="PRO_0000233728" description="Bifunctional protein GlmU">
    <location>
        <begin position="1"/>
        <end position="459"/>
    </location>
</feature>
<feature type="region of interest" description="Pyrophosphorylase" evidence="1">
    <location>
        <begin position="1"/>
        <end position="230"/>
    </location>
</feature>
<feature type="region of interest" description="Linker" evidence="1">
    <location>
        <begin position="231"/>
        <end position="251"/>
    </location>
</feature>
<feature type="region of interest" description="N-acetyltransferase" evidence="1">
    <location>
        <begin position="252"/>
        <end position="459"/>
    </location>
</feature>
<feature type="active site" description="Proton acceptor" evidence="1">
    <location>
        <position position="363"/>
    </location>
</feature>
<feature type="binding site" evidence="1">
    <location>
        <begin position="9"/>
        <end position="12"/>
    </location>
    <ligand>
        <name>UDP-N-acetyl-alpha-D-glucosamine</name>
        <dbReference type="ChEBI" id="CHEBI:57705"/>
    </ligand>
</feature>
<feature type="binding site" evidence="1">
    <location>
        <position position="23"/>
    </location>
    <ligand>
        <name>UDP-N-acetyl-alpha-D-glucosamine</name>
        <dbReference type="ChEBI" id="CHEBI:57705"/>
    </ligand>
</feature>
<feature type="binding site" evidence="1">
    <location>
        <position position="73"/>
    </location>
    <ligand>
        <name>UDP-N-acetyl-alpha-D-glucosamine</name>
        <dbReference type="ChEBI" id="CHEBI:57705"/>
    </ligand>
</feature>
<feature type="binding site" evidence="1">
    <location>
        <begin position="78"/>
        <end position="79"/>
    </location>
    <ligand>
        <name>UDP-N-acetyl-alpha-D-glucosamine</name>
        <dbReference type="ChEBI" id="CHEBI:57705"/>
    </ligand>
</feature>
<feature type="binding site" evidence="1">
    <location>
        <position position="103"/>
    </location>
    <ligand>
        <name>Mg(2+)</name>
        <dbReference type="ChEBI" id="CHEBI:18420"/>
    </ligand>
</feature>
<feature type="binding site" evidence="1">
    <location>
        <position position="140"/>
    </location>
    <ligand>
        <name>UDP-N-acetyl-alpha-D-glucosamine</name>
        <dbReference type="ChEBI" id="CHEBI:57705"/>
    </ligand>
</feature>
<feature type="binding site" evidence="1">
    <location>
        <position position="155"/>
    </location>
    <ligand>
        <name>UDP-N-acetyl-alpha-D-glucosamine</name>
        <dbReference type="ChEBI" id="CHEBI:57705"/>
    </ligand>
</feature>
<feature type="binding site" evidence="1">
    <location>
        <position position="170"/>
    </location>
    <ligand>
        <name>UDP-N-acetyl-alpha-D-glucosamine</name>
        <dbReference type="ChEBI" id="CHEBI:57705"/>
    </ligand>
</feature>
<feature type="binding site" evidence="1">
    <location>
        <position position="228"/>
    </location>
    <ligand>
        <name>Mg(2+)</name>
        <dbReference type="ChEBI" id="CHEBI:18420"/>
    </ligand>
</feature>
<feature type="binding site" evidence="1">
    <location>
        <position position="228"/>
    </location>
    <ligand>
        <name>UDP-N-acetyl-alpha-D-glucosamine</name>
        <dbReference type="ChEBI" id="CHEBI:57705"/>
    </ligand>
</feature>
<feature type="binding site" evidence="1">
    <location>
        <position position="333"/>
    </location>
    <ligand>
        <name>UDP-N-acetyl-alpha-D-glucosamine</name>
        <dbReference type="ChEBI" id="CHEBI:57705"/>
    </ligand>
</feature>
<feature type="binding site" evidence="1">
    <location>
        <position position="351"/>
    </location>
    <ligand>
        <name>UDP-N-acetyl-alpha-D-glucosamine</name>
        <dbReference type="ChEBI" id="CHEBI:57705"/>
    </ligand>
</feature>
<feature type="binding site" evidence="1">
    <location>
        <position position="366"/>
    </location>
    <ligand>
        <name>UDP-N-acetyl-alpha-D-glucosamine</name>
        <dbReference type="ChEBI" id="CHEBI:57705"/>
    </ligand>
</feature>
<feature type="binding site" evidence="1">
    <location>
        <position position="377"/>
    </location>
    <ligand>
        <name>UDP-N-acetyl-alpha-D-glucosamine</name>
        <dbReference type="ChEBI" id="CHEBI:57705"/>
    </ligand>
</feature>
<feature type="binding site" evidence="1">
    <location>
        <begin position="386"/>
        <end position="387"/>
    </location>
    <ligand>
        <name>acetyl-CoA</name>
        <dbReference type="ChEBI" id="CHEBI:57288"/>
    </ligand>
</feature>
<feature type="binding site" evidence="1">
    <location>
        <position position="423"/>
    </location>
    <ligand>
        <name>acetyl-CoA</name>
        <dbReference type="ChEBI" id="CHEBI:57288"/>
    </ligand>
</feature>
<feature type="binding site" evidence="1">
    <location>
        <position position="440"/>
    </location>
    <ligand>
        <name>acetyl-CoA</name>
        <dbReference type="ChEBI" id="CHEBI:57288"/>
    </ligand>
</feature>
<evidence type="ECO:0000255" key="1">
    <source>
        <dbReference type="HAMAP-Rule" id="MF_01631"/>
    </source>
</evidence>
<name>GLMU_BACCR</name>
<reference key="1">
    <citation type="journal article" date="2003" name="Nature">
        <title>Genome sequence of Bacillus cereus and comparative analysis with Bacillus anthracis.</title>
        <authorList>
            <person name="Ivanova N."/>
            <person name="Sorokin A."/>
            <person name="Anderson I."/>
            <person name="Galleron N."/>
            <person name="Candelon B."/>
            <person name="Kapatral V."/>
            <person name="Bhattacharyya A."/>
            <person name="Reznik G."/>
            <person name="Mikhailova N."/>
            <person name="Lapidus A."/>
            <person name="Chu L."/>
            <person name="Mazur M."/>
            <person name="Goltsman E."/>
            <person name="Larsen N."/>
            <person name="D'Souza M."/>
            <person name="Walunas T."/>
            <person name="Grechkin Y."/>
            <person name="Pusch G."/>
            <person name="Haselkorn R."/>
            <person name="Fonstein M."/>
            <person name="Ehrlich S.D."/>
            <person name="Overbeek R."/>
            <person name="Kyrpides N.C."/>
        </authorList>
    </citation>
    <scope>NUCLEOTIDE SEQUENCE [LARGE SCALE GENOMIC DNA]</scope>
    <source>
        <strain>ATCC 14579 / DSM 31 / CCUG 7414 / JCM 2152 / NBRC 15305 / NCIMB 9373 / NCTC 2599 / NRRL B-3711</strain>
    </source>
</reference>
<accession>Q81J98</accession>
<sequence>MSNRFAVILAAGKGTRMKSKLYKVLHPVCGKPMVQHVVDQVSQLGLQKLVTVVGHGAEMVQEQLGNVSEFALQAEQLGTAHAVDQAASVLANEEGTTLVICGDTPLITAETMEALLQQHKEAGAMATVLTAYIEEPAGYGRIVRNENGHVEKIVEHKDANEKELAIKEINTGTYCFDNKALFASLSKVSNDNVQGEYYLPDVIEILKNEGHIVSAYQTEQFDETLGVNDRVALSQAEIIMKNRINRKNMVNGVTIIDPSNTYISADAVIGSDTVLHPGTIIEGNTVIGSDCEIGPHTVIRDSEIGDRTTIRQSTVHDSKLGTEVSVGPFAHIRPDSVIGDEVRVGNFVEIKKTVFGNRSKASHLSYIGDAQVGEDVNLGCGSITVNYDGKNKFKTVIGNGVFIGCNSNLVAPVTVEDGAYVAAGSTITENVPSKALSVARARQVNKEDYVDQLLNKKKS</sequence>